<protein>
    <recommendedName>
        <fullName evidence="1">sn-glycerol-3-phosphate-binding periplasmic protein UgpB</fullName>
    </recommendedName>
</protein>
<sequence>MRLISISTTIAFGFAFQAQAATELQWWHAMTGANNEMIEELTKEFNESQSTYKVVPVFKGTYPETLNAGIAAFRSKQPPAIIQVFDAGSGTMMAAEGAIVPAAEILQKGGFTFDKSQYLPGIVAYYSKPDGTMLSFPYNSSSPILYYNKDAFQKAGLNVDNPPKTWPEVFEAAKKIKTSGAAPCGMTSTWLTWIQTENFAAWNNVPYGTNENGLGGTDVKLQINAPLYVEHFQAIADLAKDGAFRYGGRTSEAKQLFTSGECAILTESSGGLGDIAKSGVNYGIGQLPYYEGHGPQNTIPGGASLWVFAGKSDEEYKGVAEFFNFLSQTEIQAKLHQVSGYMPVTMAAYEETKKSGFYEKNPGRETPLLQMMGKAPTENSKGVRLVNLPQVRDILNEEFEAMLSGQQDAKTALDKAVERGNAAIAAAISN</sequence>
<evidence type="ECO:0000250" key="1">
    <source>
        <dbReference type="UniProtKB" id="P0AG80"/>
    </source>
</evidence>
<evidence type="ECO:0000255" key="2"/>
<evidence type="ECO:0000305" key="3"/>
<organism>
    <name type="scientific">Rhizobium meliloti (strain 1021)</name>
    <name type="common">Ensifer meliloti</name>
    <name type="synonym">Sinorhizobium meliloti</name>
    <dbReference type="NCBI Taxonomy" id="266834"/>
    <lineage>
        <taxon>Bacteria</taxon>
        <taxon>Pseudomonadati</taxon>
        <taxon>Pseudomonadota</taxon>
        <taxon>Alphaproteobacteria</taxon>
        <taxon>Hyphomicrobiales</taxon>
        <taxon>Rhizobiaceae</taxon>
        <taxon>Sinorhizobium/Ensifer group</taxon>
        <taxon>Sinorhizobium</taxon>
    </lineage>
</organism>
<proteinExistence type="inferred from homology"/>
<name>UGPB_RHIME</name>
<comment type="function">
    <text evidence="1">Part of the ABC transporter complex UgpBAEC involved in sn-glycerol-3-phosphate (G3P) import. Binds G3P.</text>
</comment>
<comment type="subunit">
    <text evidence="1">The complex is composed of two ATP-binding proteins (UgpC), two transmembrane proteins (UgpA and UgpE) and a solute-binding protein (UgpB).</text>
</comment>
<comment type="subcellular location">
    <subcellularLocation>
        <location evidence="1">Periplasm</location>
    </subcellularLocation>
</comment>
<comment type="similarity">
    <text evidence="3">Belongs to the bacterial solute-binding protein 1 family.</text>
</comment>
<accession>Q926H8</accession>
<feature type="signal peptide" evidence="2">
    <location>
        <begin position="1"/>
        <end position="20"/>
    </location>
</feature>
<feature type="chain" id="PRO_0000290129" description="sn-glycerol-3-phosphate-binding periplasmic protein UgpB">
    <location>
        <begin position="21"/>
        <end position="430"/>
    </location>
</feature>
<feature type="binding site" evidence="1">
    <location>
        <position position="62"/>
    </location>
    <ligand>
        <name>sn-glycerol 3-phosphate</name>
        <dbReference type="ChEBI" id="CHEBI:57597"/>
    </ligand>
</feature>
<feature type="binding site" evidence="1">
    <location>
        <position position="86"/>
    </location>
    <ligand>
        <name>sn-glycerol 3-phosphate</name>
        <dbReference type="ChEBI" id="CHEBI:57597"/>
    </ligand>
</feature>
<feature type="binding site" evidence="1">
    <location>
        <position position="141"/>
    </location>
    <ligand>
        <name>sn-glycerol 3-phosphate</name>
        <dbReference type="ChEBI" id="CHEBI:57597"/>
    </ligand>
</feature>
<feature type="binding site" evidence="1">
    <location>
        <position position="268"/>
    </location>
    <ligand>
        <name>sn-glycerol 3-phosphate</name>
        <dbReference type="ChEBI" id="CHEBI:57597"/>
    </ligand>
</feature>
<feature type="binding site" evidence="1">
    <location>
        <position position="302"/>
    </location>
    <ligand>
        <name>sn-glycerol 3-phosphate</name>
        <dbReference type="ChEBI" id="CHEBI:57597"/>
    </ligand>
</feature>
<feature type="binding site" evidence="1">
    <location>
        <position position="341"/>
    </location>
    <ligand>
        <name>sn-glycerol 3-phosphate</name>
        <dbReference type="ChEBI" id="CHEBI:57597"/>
    </ligand>
</feature>
<feature type="binding site" evidence="1">
    <location>
        <position position="392"/>
    </location>
    <ligand>
        <name>sn-glycerol 3-phosphate</name>
        <dbReference type="ChEBI" id="CHEBI:57597"/>
    </ligand>
</feature>
<keyword id="KW-0574">Periplasm</keyword>
<keyword id="KW-0614">Plasmid</keyword>
<keyword id="KW-1185">Reference proteome</keyword>
<keyword id="KW-0732">Signal</keyword>
<keyword id="KW-0813">Transport</keyword>
<gene>
    <name type="primary">ugpB</name>
    <name type="ordered locus">RB0402</name>
    <name type="ORF">SMb20416</name>
</gene>
<dbReference type="EMBL" id="AL591985">
    <property type="protein sequence ID" value="CAC48802.1"/>
    <property type="molecule type" value="Genomic_DNA"/>
</dbReference>
<dbReference type="PIR" id="B95892">
    <property type="entry name" value="B95892"/>
</dbReference>
<dbReference type="RefSeq" id="NP_436942.1">
    <property type="nucleotide sequence ID" value="NC_003078.1"/>
</dbReference>
<dbReference type="RefSeq" id="WP_010975290.1">
    <property type="nucleotide sequence ID" value="NC_003078.1"/>
</dbReference>
<dbReference type="SMR" id="Q926H8"/>
<dbReference type="EnsemblBacteria" id="CAC48802">
    <property type="protein sequence ID" value="CAC48802"/>
    <property type="gene ID" value="SM_b20416"/>
</dbReference>
<dbReference type="GeneID" id="89578476"/>
<dbReference type="KEGG" id="sme:SM_b20416"/>
<dbReference type="PATRIC" id="fig|266834.11.peg.5331"/>
<dbReference type="eggNOG" id="COG1653">
    <property type="taxonomic scope" value="Bacteria"/>
</dbReference>
<dbReference type="HOGENOM" id="CLU_031285_3_0_5"/>
<dbReference type="OrthoDB" id="9762335at2"/>
<dbReference type="Proteomes" id="UP000001976">
    <property type="component" value="Plasmid pSymB"/>
</dbReference>
<dbReference type="GO" id="GO:0042597">
    <property type="term" value="C:periplasmic space"/>
    <property type="evidence" value="ECO:0007669"/>
    <property type="project" value="UniProtKB-SubCell"/>
</dbReference>
<dbReference type="CDD" id="cd14748">
    <property type="entry name" value="PBP2_UgpB"/>
    <property type="match status" value="1"/>
</dbReference>
<dbReference type="Gene3D" id="3.40.190.10">
    <property type="entry name" value="Periplasmic binding protein-like II"/>
    <property type="match status" value="2"/>
</dbReference>
<dbReference type="InterPro" id="IPR050490">
    <property type="entry name" value="Bact_solute-bd_prot1"/>
</dbReference>
<dbReference type="InterPro" id="IPR006059">
    <property type="entry name" value="SBP"/>
</dbReference>
<dbReference type="NCBIfam" id="NF008211">
    <property type="entry name" value="PRK10974.1"/>
    <property type="match status" value="1"/>
</dbReference>
<dbReference type="PANTHER" id="PTHR43649">
    <property type="entry name" value="ARABINOSE-BINDING PROTEIN-RELATED"/>
    <property type="match status" value="1"/>
</dbReference>
<dbReference type="PANTHER" id="PTHR43649:SF31">
    <property type="entry name" value="SN-GLYCEROL-3-PHOSPHATE-BINDING PERIPLASMIC PROTEIN UGPB"/>
    <property type="match status" value="1"/>
</dbReference>
<dbReference type="Pfam" id="PF13416">
    <property type="entry name" value="SBP_bac_8"/>
    <property type="match status" value="1"/>
</dbReference>
<dbReference type="SUPFAM" id="SSF53850">
    <property type="entry name" value="Periplasmic binding protein-like II"/>
    <property type="match status" value="1"/>
</dbReference>
<geneLocation type="plasmid">
    <name>pSymB</name>
    <name>megaplasmid 2</name>
</geneLocation>
<reference key="1">
    <citation type="journal article" date="2001" name="Proc. Natl. Acad. Sci. U.S.A.">
        <title>The complete sequence of the 1,683-kb pSymB megaplasmid from the N2-fixing endosymbiont Sinorhizobium meliloti.</title>
        <authorList>
            <person name="Finan T.M."/>
            <person name="Weidner S."/>
            <person name="Wong K."/>
            <person name="Buhrmester J."/>
            <person name="Chain P."/>
            <person name="Vorhoelter F.J."/>
            <person name="Hernandez-Lucas I."/>
            <person name="Becker A."/>
            <person name="Cowie A."/>
            <person name="Gouzy J."/>
            <person name="Golding B."/>
            <person name="Puehler A."/>
        </authorList>
    </citation>
    <scope>NUCLEOTIDE SEQUENCE [LARGE SCALE GENOMIC DNA]</scope>
    <source>
        <strain>1021</strain>
    </source>
</reference>
<reference key="2">
    <citation type="journal article" date="2001" name="Science">
        <title>The composite genome of the legume symbiont Sinorhizobium meliloti.</title>
        <authorList>
            <person name="Galibert F."/>
            <person name="Finan T.M."/>
            <person name="Long S.R."/>
            <person name="Puehler A."/>
            <person name="Abola P."/>
            <person name="Ampe F."/>
            <person name="Barloy-Hubler F."/>
            <person name="Barnett M.J."/>
            <person name="Becker A."/>
            <person name="Boistard P."/>
            <person name="Bothe G."/>
            <person name="Boutry M."/>
            <person name="Bowser L."/>
            <person name="Buhrmester J."/>
            <person name="Cadieu E."/>
            <person name="Capela D."/>
            <person name="Chain P."/>
            <person name="Cowie A."/>
            <person name="Davis R.W."/>
            <person name="Dreano S."/>
            <person name="Federspiel N.A."/>
            <person name="Fisher R.F."/>
            <person name="Gloux S."/>
            <person name="Godrie T."/>
            <person name="Goffeau A."/>
            <person name="Golding B."/>
            <person name="Gouzy J."/>
            <person name="Gurjal M."/>
            <person name="Hernandez-Lucas I."/>
            <person name="Hong A."/>
            <person name="Huizar L."/>
            <person name="Hyman R.W."/>
            <person name="Jones T."/>
            <person name="Kahn D."/>
            <person name="Kahn M.L."/>
            <person name="Kalman S."/>
            <person name="Keating D.H."/>
            <person name="Kiss E."/>
            <person name="Komp C."/>
            <person name="Lelaure V."/>
            <person name="Masuy D."/>
            <person name="Palm C."/>
            <person name="Peck M.C."/>
            <person name="Pohl T.M."/>
            <person name="Portetelle D."/>
            <person name="Purnelle B."/>
            <person name="Ramsperger U."/>
            <person name="Surzycki R."/>
            <person name="Thebault P."/>
            <person name="Vandenbol M."/>
            <person name="Vorhoelter F.J."/>
            <person name="Weidner S."/>
            <person name="Wells D.H."/>
            <person name="Wong K."/>
            <person name="Yeh K.-C."/>
            <person name="Batut J."/>
        </authorList>
    </citation>
    <scope>NUCLEOTIDE SEQUENCE [LARGE SCALE GENOMIC DNA]</scope>
    <source>
        <strain>1021</strain>
    </source>
</reference>